<proteinExistence type="inferred from homology"/>
<reference key="1">
    <citation type="submission" date="2007-11" db="EMBL/GenBank/DDBJ databases">
        <authorList>
            <consortium name="The Salmonella enterica serovar Arizonae Genome Sequencing Project"/>
            <person name="McClelland M."/>
            <person name="Sanderson E.K."/>
            <person name="Porwollik S."/>
            <person name="Spieth J."/>
            <person name="Clifton W.S."/>
            <person name="Fulton R."/>
            <person name="Chunyan W."/>
            <person name="Wollam A."/>
            <person name="Shah N."/>
            <person name="Pepin K."/>
            <person name="Bhonagiri V."/>
            <person name="Nash W."/>
            <person name="Johnson M."/>
            <person name="Thiruvilangam P."/>
            <person name="Wilson R."/>
        </authorList>
    </citation>
    <scope>NUCLEOTIDE SEQUENCE [LARGE SCALE GENOMIC DNA]</scope>
    <source>
        <strain>ATCC BAA-731 / CDC346-86 / RSK2980</strain>
    </source>
</reference>
<accession>A9MFP1</accession>
<sequence length="316" mass="35184">MNDVSKASLPKAIFLMGPTASGKTALAIELRKVLPVELISVDSALIYRGMDIGTAKPSADELKAAPHRLLNIRDPSQAYSAADFRRDALAQMAEITAAGRIPLLVGGTMLYFKALLEGLSPLPSADPEVRSRIEQQAAELGWELLHQQLQEIDPVAAARIHPNDPQRLSRALEVFFISGKTLTELTQTSGDALPYQVHQFAIAPASRELLHQRIELRFHQMLASGFEAEVRALFARGDLHTDLPSIRCVGYRQMWSYIEGEISYDEMVYRGVCATRQLAKRQMTWLRGWEGVRWLDSENPDRARKEVLQVVGAIAD</sequence>
<comment type="function">
    <text evidence="1">Catalyzes the transfer of a dimethylallyl group onto the adenine at position 37 in tRNAs that read codons beginning with uridine, leading to the formation of N6-(dimethylallyl)adenosine (i(6)A).</text>
</comment>
<comment type="catalytic activity">
    <reaction evidence="1">
        <text>adenosine(37) in tRNA + dimethylallyl diphosphate = N(6)-dimethylallyladenosine(37) in tRNA + diphosphate</text>
        <dbReference type="Rhea" id="RHEA:26482"/>
        <dbReference type="Rhea" id="RHEA-COMP:10162"/>
        <dbReference type="Rhea" id="RHEA-COMP:10375"/>
        <dbReference type="ChEBI" id="CHEBI:33019"/>
        <dbReference type="ChEBI" id="CHEBI:57623"/>
        <dbReference type="ChEBI" id="CHEBI:74411"/>
        <dbReference type="ChEBI" id="CHEBI:74415"/>
        <dbReference type="EC" id="2.5.1.75"/>
    </reaction>
</comment>
<comment type="cofactor">
    <cofactor evidence="1">
        <name>Mg(2+)</name>
        <dbReference type="ChEBI" id="CHEBI:18420"/>
    </cofactor>
</comment>
<comment type="subunit">
    <text evidence="1">Monomer.</text>
</comment>
<comment type="similarity">
    <text evidence="1">Belongs to the IPP transferase family.</text>
</comment>
<keyword id="KW-0067">ATP-binding</keyword>
<keyword id="KW-0460">Magnesium</keyword>
<keyword id="KW-0547">Nucleotide-binding</keyword>
<keyword id="KW-1185">Reference proteome</keyword>
<keyword id="KW-0808">Transferase</keyword>
<keyword id="KW-0819">tRNA processing</keyword>
<protein>
    <recommendedName>
        <fullName evidence="1">tRNA dimethylallyltransferase</fullName>
        <ecNumber evidence="1">2.5.1.75</ecNumber>
    </recommendedName>
    <alternativeName>
        <fullName evidence="1">Dimethylallyl diphosphate:tRNA dimethylallyltransferase</fullName>
        <shortName evidence="1">DMAPP:tRNA dimethylallyltransferase</shortName>
        <shortName evidence="1">DMATase</shortName>
    </alternativeName>
    <alternativeName>
        <fullName evidence="1">Isopentenyl-diphosphate:tRNA isopentenyltransferase</fullName>
        <shortName evidence="1">IPP transferase</shortName>
        <shortName evidence="1">IPPT</shortName>
        <shortName evidence="1">IPTase</shortName>
    </alternativeName>
</protein>
<organism>
    <name type="scientific">Salmonella arizonae (strain ATCC BAA-731 / CDC346-86 / RSK2980)</name>
    <dbReference type="NCBI Taxonomy" id="41514"/>
    <lineage>
        <taxon>Bacteria</taxon>
        <taxon>Pseudomonadati</taxon>
        <taxon>Pseudomonadota</taxon>
        <taxon>Gammaproteobacteria</taxon>
        <taxon>Enterobacterales</taxon>
        <taxon>Enterobacteriaceae</taxon>
        <taxon>Salmonella</taxon>
    </lineage>
</organism>
<dbReference type="EC" id="2.5.1.75" evidence="1"/>
<dbReference type="EMBL" id="CP000880">
    <property type="protein sequence ID" value="ABX23107.1"/>
    <property type="molecule type" value="Genomic_DNA"/>
</dbReference>
<dbReference type="SMR" id="A9MFP1"/>
<dbReference type="STRING" id="41514.SARI_03271"/>
<dbReference type="KEGG" id="ses:SARI_03271"/>
<dbReference type="HOGENOM" id="CLU_032616_0_0_6"/>
<dbReference type="Proteomes" id="UP000002084">
    <property type="component" value="Chromosome"/>
</dbReference>
<dbReference type="GO" id="GO:0005524">
    <property type="term" value="F:ATP binding"/>
    <property type="evidence" value="ECO:0007669"/>
    <property type="project" value="UniProtKB-UniRule"/>
</dbReference>
<dbReference type="GO" id="GO:0052381">
    <property type="term" value="F:tRNA dimethylallyltransferase activity"/>
    <property type="evidence" value="ECO:0007669"/>
    <property type="project" value="UniProtKB-UniRule"/>
</dbReference>
<dbReference type="GO" id="GO:0006400">
    <property type="term" value="P:tRNA modification"/>
    <property type="evidence" value="ECO:0007669"/>
    <property type="project" value="TreeGrafter"/>
</dbReference>
<dbReference type="FunFam" id="1.10.20.140:FF:000001">
    <property type="entry name" value="tRNA dimethylallyltransferase"/>
    <property type="match status" value="1"/>
</dbReference>
<dbReference type="FunFam" id="1.10.287.890:FF:000001">
    <property type="entry name" value="tRNA dimethylallyltransferase"/>
    <property type="match status" value="1"/>
</dbReference>
<dbReference type="Gene3D" id="1.10.20.140">
    <property type="match status" value="1"/>
</dbReference>
<dbReference type="Gene3D" id="1.10.287.890">
    <property type="entry name" value="Crystal structure of tRNA isopentenylpyrophosphate transferase (bh2366) domain"/>
    <property type="match status" value="1"/>
</dbReference>
<dbReference type="Gene3D" id="3.40.50.300">
    <property type="entry name" value="P-loop containing nucleotide triphosphate hydrolases"/>
    <property type="match status" value="1"/>
</dbReference>
<dbReference type="HAMAP" id="MF_00185">
    <property type="entry name" value="IPP_trans"/>
    <property type="match status" value="1"/>
</dbReference>
<dbReference type="InterPro" id="IPR039657">
    <property type="entry name" value="Dimethylallyltransferase"/>
</dbReference>
<dbReference type="InterPro" id="IPR018022">
    <property type="entry name" value="IPT"/>
</dbReference>
<dbReference type="InterPro" id="IPR027417">
    <property type="entry name" value="P-loop_NTPase"/>
</dbReference>
<dbReference type="NCBIfam" id="TIGR00174">
    <property type="entry name" value="miaA"/>
    <property type="match status" value="1"/>
</dbReference>
<dbReference type="PANTHER" id="PTHR11088">
    <property type="entry name" value="TRNA DIMETHYLALLYLTRANSFERASE"/>
    <property type="match status" value="1"/>
</dbReference>
<dbReference type="PANTHER" id="PTHR11088:SF60">
    <property type="entry name" value="TRNA DIMETHYLALLYLTRANSFERASE"/>
    <property type="match status" value="1"/>
</dbReference>
<dbReference type="Pfam" id="PF01715">
    <property type="entry name" value="IPPT"/>
    <property type="match status" value="1"/>
</dbReference>
<dbReference type="SUPFAM" id="SSF52540">
    <property type="entry name" value="P-loop containing nucleoside triphosphate hydrolases"/>
    <property type="match status" value="1"/>
</dbReference>
<gene>
    <name evidence="1" type="primary">miaA</name>
    <name type="ordered locus">SARI_03271</name>
</gene>
<evidence type="ECO:0000255" key="1">
    <source>
        <dbReference type="HAMAP-Rule" id="MF_00185"/>
    </source>
</evidence>
<name>MIAA_SALAR</name>
<feature type="chain" id="PRO_1000077402" description="tRNA dimethylallyltransferase">
    <location>
        <begin position="1"/>
        <end position="316"/>
    </location>
</feature>
<feature type="region of interest" description="Interaction with substrate tRNA" evidence="1">
    <location>
        <begin position="42"/>
        <end position="45"/>
    </location>
</feature>
<feature type="region of interest" description="Interaction with substrate tRNA" evidence="1">
    <location>
        <begin position="166"/>
        <end position="170"/>
    </location>
</feature>
<feature type="region of interest" description="Interaction with substrate tRNA" evidence="1">
    <location>
        <begin position="247"/>
        <end position="252"/>
    </location>
</feature>
<feature type="binding site" evidence="1">
    <location>
        <begin position="17"/>
        <end position="24"/>
    </location>
    <ligand>
        <name>ATP</name>
        <dbReference type="ChEBI" id="CHEBI:30616"/>
    </ligand>
</feature>
<feature type="binding site" evidence="1">
    <location>
        <begin position="19"/>
        <end position="24"/>
    </location>
    <ligand>
        <name>substrate</name>
    </ligand>
</feature>
<feature type="site" description="Interaction with substrate tRNA" evidence="1">
    <location>
        <position position="108"/>
    </location>
</feature>
<feature type="site" description="Interaction with substrate tRNA" evidence="1">
    <location>
        <position position="130"/>
    </location>
</feature>